<accession>A3M3W2</accession>
<proteinExistence type="inferred from homology"/>
<organism>
    <name type="scientific">Acinetobacter baumannii (strain ATCC 17978 / DSM 105126 / CIP 53.77 / LMG 1025 / NCDC KC755 / 5377)</name>
    <dbReference type="NCBI Taxonomy" id="400667"/>
    <lineage>
        <taxon>Bacteria</taxon>
        <taxon>Pseudomonadati</taxon>
        <taxon>Pseudomonadota</taxon>
        <taxon>Gammaproteobacteria</taxon>
        <taxon>Moraxellales</taxon>
        <taxon>Moraxellaceae</taxon>
        <taxon>Acinetobacter</taxon>
        <taxon>Acinetobacter calcoaceticus/baumannii complex</taxon>
    </lineage>
</organism>
<reference key="1">
    <citation type="journal article" date="2007" name="Genes Dev.">
        <title>New insights into Acinetobacter baumannii pathogenesis revealed by high-density pyrosequencing and transposon mutagenesis.</title>
        <authorList>
            <person name="Smith M.G."/>
            <person name="Gianoulis T.A."/>
            <person name="Pukatzki S."/>
            <person name="Mekalanos J.J."/>
            <person name="Ornston L.N."/>
            <person name="Gerstein M."/>
            <person name="Snyder M."/>
        </authorList>
    </citation>
    <scope>NUCLEOTIDE SEQUENCE [LARGE SCALE GENOMIC DNA]</scope>
    <source>
        <strain>ATCC 17978 / DSM 105126 / CIP 53.77 / LMG 1025 / NCDC KC755 / 5377</strain>
    </source>
</reference>
<sequence>MTSAEIREAFLRYFETQGHTRVASSSLVPANDPTLLFTNAGMNQFKDCFLGLEKRDYVRATTSQKCVRAGGKHNDLDNVGYTARHHTFFEMLGNFSFGDYFKRDALKFAWEFLTSEQWLALPKDKLYVTVYHTDDEAYDIWNKEIGLAPERIIRIGDNKGEKYASDNFWAMGDTGPCGPCSEIFFDHGEHIWGGLPGSPEEDGDRFIEIWNNVFMQFNRTADGVLHPLPAPSVDTGMGLERISAVLQHVNSNYDIDLFQHLLKAAANIIGIEDEGQPSLRVVADHARSCCFLIADGVNPSNEGRGYVLRRIIRRAVRHGNKLGATGTFFYKMLQPLIEVMGQAYPELEARREVIEATLIREEEQFAKTLEQGLKLLEGELAQLKDKTIPGATVFKLYDTYGFPTDLTADIARERGFIIDEAGFEVEMAAQRQRARDAGKFAVDYNNIVKVEGETQFDGYTNTTGQGQIVAIYKDGVQVDEVSEGDEALIVLNQTPFYAESGGQIGDTGIFKNETGIFEVQDTKKSGGAFVHQGIVTVGNLKTSQNVEAIVKADIREATARNHSATHLLHAALRQILGSHVQQKGSLVASDILRFDFANDQPVSFEQLQQVERLVNAEIIANTAVTTELLDIETAKAKGAMMLFGEKYGDEVRVLSMGSVIDEKNFSIELCGGIHVKRTGDIGLFKITSEGGVAAGVRRIEAVTGTKALEVVQKADHDIQHINSLLKAQKDQTVERVQANVELVSALQKQIEQLNQKLANFQAADLIDQVQTIAGRQTLITTVQGVDAKALRNLHDSVKSKLENAVIVLAGVEGDKVSLLASVASQYTANLKAGDIIKHLATELGGKGGGKPDLAQGGAPLNEKFGQVMAALPAWLEQK</sequence>
<dbReference type="EC" id="6.1.1.7" evidence="1"/>
<dbReference type="EMBL" id="CP000521">
    <property type="protein sequence ID" value="ABO11606.2"/>
    <property type="molecule type" value="Genomic_DNA"/>
</dbReference>
<dbReference type="RefSeq" id="WP_000199457.1">
    <property type="nucleotide sequence ID" value="NZ_CP053098.1"/>
</dbReference>
<dbReference type="SMR" id="A3M3W2"/>
<dbReference type="KEGG" id="acb:A1S_1176"/>
<dbReference type="HOGENOM" id="CLU_004485_1_1_6"/>
<dbReference type="GO" id="GO:0005829">
    <property type="term" value="C:cytosol"/>
    <property type="evidence" value="ECO:0007669"/>
    <property type="project" value="TreeGrafter"/>
</dbReference>
<dbReference type="GO" id="GO:0004813">
    <property type="term" value="F:alanine-tRNA ligase activity"/>
    <property type="evidence" value="ECO:0007669"/>
    <property type="project" value="UniProtKB-UniRule"/>
</dbReference>
<dbReference type="GO" id="GO:0002161">
    <property type="term" value="F:aminoacyl-tRNA deacylase activity"/>
    <property type="evidence" value="ECO:0007669"/>
    <property type="project" value="TreeGrafter"/>
</dbReference>
<dbReference type="GO" id="GO:0005524">
    <property type="term" value="F:ATP binding"/>
    <property type="evidence" value="ECO:0007669"/>
    <property type="project" value="UniProtKB-UniRule"/>
</dbReference>
<dbReference type="GO" id="GO:0000049">
    <property type="term" value="F:tRNA binding"/>
    <property type="evidence" value="ECO:0007669"/>
    <property type="project" value="UniProtKB-KW"/>
</dbReference>
<dbReference type="GO" id="GO:0008270">
    <property type="term" value="F:zinc ion binding"/>
    <property type="evidence" value="ECO:0007669"/>
    <property type="project" value="UniProtKB-UniRule"/>
</dbReference>
<dbReference type="GO" id="GO:0006419">
    <property type="term" value="P:alanyl-tRNA aminoacylation"/>
    <property type="evidence" value="ECO:0007669"/>
    <property type="project" value="UniProtKB-UniRule"/>
</dbReference>
<dbReference type="GO" id="GO:0045892">
    <property type="term" value="P:negative regulation of DNA-templated transcription"/>
    <property type="evidence" value="ECO:0007669"/>
    <property type="project" value="TreeGrafter"/>
</dbReference>
<dbReference type="CDD" id="cd00673">
    <property type="entry name" value="AlaRS_core"/>
    <property type="match status" value="1"/>
</dbReference>
<dbReference type="FunFam" id="2.40.30.130:FF:000001">
    <property type="entry name" value="Alanine--tRNA ligase"/>
    <property type="match status" value="1"/>
</dbReference>
<dbReference type="FunFam" id="3.10.310.40:FF:000001">
    <property type="entry name" value="Alanine--tRNA ligase"/>
    <property type="match status" value="1"/>
</dbReference>
<dbReference type="FunFam" id="3.30.54.20:FF:000001">
    <property type="entry name" value="Alanine--tRNA ligase"/>
    <property type="match status" value="1"/>
</dbReference>
<dbReference type="FunFam" id="3.30.930.10:FF:000004">
    <property type="entry name" value="Alanine--tRNA ligase"/>
    <property type="match status" value="1"/>
</dbReference>
<dbReference type="FunFam" id="3.30.980.10:FF:000004">
    <property type="entry name" value="Alanine--tRNA ligase, cytoplasmic"/>
    <property type="match status" value="1"/>
</dbReference>
<dbReference type="Gene3D" id="2.40.30.130">
    <property type="match status" value="1"/>
</dbReference>
<dbReference type="Gene3D" id="3.10.310.40">
    <property type="match status" value="1"/>
</dbReference>
<dbReference type="Gene3D" id="3.30.54.20">
    <property type="match status" value="1"/>
</dbReference>
<dbReference type="Gene3D" id="6.10.250.550">
    <property type="match status" value="1"/>
</dbReference>
<dbReference type="Gene3D" id="3.30.930.10">
    <property type="entry name" value="Bira Bifunctional Protein, Domain 2"/>
    <property type="match status" value="1"/>
</dbReference>
<dbReference type="Gene3D" id="3.30.980.10">
    <property type="entry name" value="Threonyl-trna Synthetase, Chain A, domain 2"/>
    <property type="match status" value="1"/>
</dbReference>
<dbReference type="HAMAP" id="MF_00036_B">
    <property type="entry name" value="Ala_tRNA_synth_B"/>
    <property type="match status" value="1"/>
</dbReference>
<dbReference type="InterPro" id="IPR045864">
    <property type="entry name" value="aa-tRNA-synth_II/BPL/LPL"/>
</dbReference>
<dbReference type="InterPro" id="IPR002318">
    <property type="entry name" value="Ala-tRNA-lgiase_IIc"/>
</dbReference>
<dbReference type="InterPro" id="IPR018162">
    <property type="entry name" value="Ala-tRNA-ligase_IIc_anticod-bd"/>
</dbReference>
<dbReference type="InterPro" id="IPR018165">
    <property type="entry name" value="Ala-tRNA-synth_IIc_core"/>
</dbReference>
<dbReference type="InterPro" id="IPR018164">
    <property type="entry name" value="Ala-tRNA-synth_IIc_N"/>
</dbReference>
<dbReference type="InterPro" id="IPR050058">
    <property type="entry name" value="Ala-tRNA_ligase"/>
</dbReference>
<dbReference type="InterPro" id="IPR023033">
    <property type="entry name" value="Ala_tRNA_ligase_euk/bac"/>
</dbReference>
<dbReference type="InterPro" id="IPR003156">
    <property type="entry name" value="DHHA1_dom"/>
</dbReference>
<dbReference type="InterPro" id="IPR018163">
    <property type="entry name" value="Thr/Ala-tRNA-synth_IIc_edit"/>
</dbReference>
<dbReference type="InterPro" id="IPR009000">
    <property type="entry name" value="Transl_B-barrel_sf"/>
</dbReference>
<dbReference type="InterPro" id="IPR012947">
    <property type="entry name" value="tRNA_SAD"/>
</dbReference>
<dbReference type="NCBIfam" id="TIGR00344">
    <property type="entry name" value="alaS"/>
    <property type="match status" value="1"/>
</dbReference>
<dbReference type="PANTHER" id="PTHR11777:SF9">
    <property type="entry name" value="ALANINE--TRNA LIGASE, CYTOPLASMIC"/>
    <property type="match status" value="1"/>
</dbReference>
<dbReference type="PANTHER" id="PTHR11777">
    <property type="entry name" value="ALANYL-TRNA SYNTHETASE"/>
    <property type="match status" value="1"/>
</dbReference>
<dbReference type="Pfam" id="PF02272">
    <property type="entry name" value="DHHA1"/>
    <property type="match status" value="1"/>
</dbReference>
<dbReference type="Pfam" id="PF01411">
    <property type="entry name" value="tRNA-synt_2c"/>
    <property type="match status" value="1"/>
</dbReference>
<dbReference type="Pfam" id="PF07973">
    <property type="entry name" value="tRNA_SAD"/>
    <property type="match status" value="1"/>
</dbReference>
<dbReference type="PRINTS" id="PR00980">
    <property type="entry name" value="TRNASYNTHALA"/>
</dbReference>
<dbReference type="SMART" id="SM00863">
    <property type="entry name" value="tRNA_SAD"/>
    <property type="match status" value="1"/>
</dbReference>
<dbReference type="SUPFAM" id="SSF55681">
    <property type="entry name" value="Class II aaRS and biotin synthetases"/>
    <property type="match status" value="1"/>
</dbReference>
<dbReference type="SUPFAM" id="SSF101353">
    <property type="entry name" value="Putative anticodon-binding domain of alanyl-tRNA synthetase (AlaRS)"/>
    <property type="match status" value="1"/>
</dbReference>
<dbReference type="SUPFAM" id="SSF55186">
    <property type="entry name" value="ThrRS/AlaRS common domain"/>
    <property type="match status" value="1"/>
</dbReference>
<dbReference type="SUPFAM" id="SSF50447">
    <property type="entry name" value="Translation proteins"/>
    <property type="match status" value="1"/>
</dbReference>
<dbReference type="PROSITE" id="PS50860">
    <property type="entry name" value="AA_TRNA_LIGASE_II_ALA"/>
    <property type="match status" value="1"/>
</dbReference>
<comment type="function">
    <text evidence="1">Catalyzes the attachment of alanine to tRNA(Ala) in a two-step reaction: alanine is first activated by ATP to form Ala-AMP and then transferred to the acceptor end of tRNA(Ala). Also edits incorrectly charged Ser-tRNA(Ala) and Gly-tRNA(Ala) via its editing domain.</text>
</comment>
<comment type="catalytic activity">
    <reaction evidence="1">
        <text>tRNA(Ala) + L-alanine + ATP = L-alanyl-tRNA(Ala) + AMP + diphosphate</text>
        <dbReference type="Rhea" id="RHEA:12540"/>
        <dbReference type="Rhea" id="RHEA-COMP:9657"/>
        <dbReference type="Rhea" id="RHEA-COMP:9923"/>
        <dbReference type="ChEBI" id="CHEBI:30616"/>
        <dbReference type="ChEBI" id="CHEBI:33019"/>
        <dbReference type="ChEBI" id="CHEBI:57972"/>
        <dbReference type="ChEBI" id="CHEBI:78442"/>
        <dbReference type="ChEBI" id="CHEBI:78497"/>
        <dbReference type="ChEBI" id="CHEBI:456215"/>
        <dbReference type="EC" id="6.1.1.7"/>
    </reaction>
</comment>
<comment type="cofactor">
    <cofactor evidence="1">
        <name>Zn(2+)</name>
        <dbReference type="ChEBI" id="CHEBI:29105"/>
    </cofactor>
    <text evidence="1">Binds 1 zinc ion per subunit.</text>
</comment>
<comment type="subcellular location">
    <subcellularLocation>
        <location evidence="1">Cytoplasm</location>
    </subcellularLocation>
</comment>
<comment type="domain">
    <text evidence="1">Consists of three domains; the N-terminal catalytic domain, the editing domain and the C-terminal C-Ala domain. The editing domain removes incorrectly charged amino acids, while the C-Ala domain, along with tRNA(Ala), serves as a bridge to cooperatively bring together the editing and aminoacylation centers thus stimulating deacylation of misacylated tRNAs.</text>
</comment>
<comment type="similarity">
    <text evidence="1">Belongs to the class-II aminoacyl-tRNA synthetase family.</text>
</comment>
<evidence type="ECO:0000255" key="1">
    <source>
        <dbReference type="HAMAP-Rule" id="MF_00036"/>
    </source>
</evidence>
<gene>
    <name evidence="1" type="primary">alaS</name>
    <name type="ordered locus">A1S_1176</name>
</gene>
<protein>
    <recommendedName>
        <fullName evidence="1">Alanine--tRNA ligase</fullName>
        <ecNumber evidence="1">6.1.1.7</ecNumber>
    </recommendedName>
    <alternativeName>
        <fullName evidence="1">Alanyl-tRNA synthetase</fullName>
        <shortName evidence="1">AlaRS</shortName>
    </alternativeName>
</protein>
<name>SYA_ACIBT</name>
<feature type="chain" id="PRO_0000347474" description="Alanine--tRNA ligase">
    <location>
        <begin position="1"/>
        <end position="878"/>
    </location>
</feature>
<feature type="binding site" evidence="1">
    <location>
        <position position="562"/>
    </location>
    <ligand>
        <name>Zn(2+)</name>
        <dbReference type="ChEBI" id="CHEBI:29105"/>
    </ligand>
</feature>
<feature type="binding site" evidence="1">
    <location>
        <position position="566"/>
    </location>
    <ligand>
        <name>Zn(2+)</name>
        <dbReference type="ChEBI" id="CHEBI:29105"/>
    </ligand>
</feature>
<feature type="binding site" evidence="1">
    <location>
        <position position="670"/>
    </location>
    <ligand>
        <name>Zn(2+)</name>
        <dbReference type="ChEBI" id="CHEBI:29105"/>
    </ligand>
</feature>
<feature type="binding site" evidence="1">
    <location>
        <position position="674"/>
    </location>
    <ligand>
        <name>Zn(2+)</name>
        <dbReference type="ChEBI" id="CHEBI:29105"/>
    </ligand>
</feature>
<keyword id="KW-0030">Aminoacyl-tRNA synthetase</keyword>
<keyword id="KW-0067">ATP-binding</keyword>
<keyword id="KW-0963">Cytoplasm</keyword>
<keyword id="KW-0436">Ligase</keyword>
<keyword id="KW-0479">Metal-binding</keyword>
<keyword id="KW-0547">Nucleotide-binding</keyword>
<keyword id="KW-0648">Protein biosynthesis</keyword>
<keyword id="KW-0694">RNA-binding</keyword>
<keyword id="KW-0820">tRNA-binding</keyword>
<keyword id="KW-0862">Zinc</keyword>